<feature type="chain" id="PRO_0000155638" description="Putative manganese efflux pump MntP">
    <location>
        <begin position="1"/>
        <end position="193"/>
    </location>
</feature>
<feature type="transmembrane region" description="Helical" evidence="1">
    <location>
        <begin position="8"/>
        <end position="28"/>
    </location>
</feature>
<feature type="transmembrane region" description="Helical" evidence="1">
    <location>
        <begin position="37"/>
        <end position="57"/>
    </location>
</feature>
<feature type="transmembrane region" description="Helical" evidence="1">
    <location>
        <begin position="61"/>
        <end position="81"/>
    </location>
</feature>
<feature type="transmembrane region" description="Helical" evidence="1">
    <location>
        <begin position="109"/>
        <end position="129"/>
    </location>
</feature>
<feature type="transmembrane region" description="Helical" evidence="1">
    <location>
        <begin position="138"/>
        <end position="158"/>
    </location>
</feature>
<feature type="transmembrane region" description="Helical" evidence="1">
    <location>
        <begin position="172"/>
        <end position="192"/>
    </location>
</feature>
<name>MNTP_BACTN</name>
<reference key="1">
    <citation type="journal article" date="2003" name="Science">
        <title>A genomic view of the human-Bacteroides thetaiotaomicron symbiosis.</title>
        <authorList>
            <person name="Xu J."/>
            <person name="Bjursell M.K."/>
            <person name="Himrod J."/>
            <person name="Deng S."/>
            <person name="Carmichael L.K."/>
            <person name="Chiang H.C."/>
            <person name="Hooper L.V."/>
            <person name="Gordon J.I."/>
        </authorList>
    </citation>
    <scope>NUCLEOTIDE SEQUENCE [LARGE SCALE GENOMIC DNA]</scope>
    <source>
        <strain>ATCC 29148 / DSM 2079 / JCM 5827 / CCUG 10774 / NCTC 10582 / VPI-5482 / E50</strain>
    </source>
</reference>
<comment type="function">
    <text evidence="1">Probably functions as a manganese efflux pump.</text>
</comment>
<comment type="subcellular location">
    <subcellularLocation>
        <location evidence="1">Cell inner membrane</location>
        <topology evidence="1">Multi-pass membrane protein</topology>
    </subcellularLocation>
</comment>
<comment type="similarity">
    <text evidence="1">Belongs to the MntP (TC 9.B.29) family.</text>
</comment>
<organism>
    <name type="scientific">Bacteroides thetaiotaomicron (strain ATCC 29148 / DSM 2079 / JCM 5827 / CCUG 10774 / NCTC 10582 / VPI-5482 / E50)</name>
    <dbReference type="NCBI Taxonomy" id="226186"/>
    <lineage>
        <taxon>Bacteria</taxon>
        <taxon>Pseudomonadati</taxon>
        <taxon>Bacteroidota</taxon>
        <taxon>Bacteroidia</taxon>
        <taxon>Bacteroidales</taxon>
        <taxon>Bacteroidaceae</taxon>
        <taxon>Bacteroides</taxon>
    </lineage>
</organism>
<proteinExistence type="inferred from homology"/>
<accession>Q89Z16</accession>
<dbReference type="EMBL" id="AE015928">
    <property type="protein sequence ID" value="AAO79666.1"/>
    <property type="molecule type" value="Genomic_DNA"/>
</dbReference>
<dbReference type="RefSeq" id="NP_813472.1">
    <property type="nucleotide sequence ID" value="NC_004663.1"/>
</dbReference>
<dbReference type="RefSeq" id="WP_008764711.1">
    <property type="nucleotide sequence ID" value="NC_004663.1"/>
</dbReference>
<dbReference type="FunCoup" id="Q89Z16">
    <property type="interactions" value="61"/>
</dbReference>
<dbReference type="STRING" id="226186.BT_4561"/>
<dbReference type="PaxDb" id="226186-BT_4561"/>
<dbReference type="EnsemblBacteria" id="AAO79666">
    <property type="protein sequence ID" value="AAO79666"/>
    <property type="gene ID" value="BT_4561"/>
</dbReference>
<dbReference type="GeneID" id="60925735"/>
<dbReference type="KEGG" id="bth:BT_4561"/>
<dbReference type="PATRIC" id="fig|226186.12.peg.4642"/>
<dbReference type="eggNOG" id="COG1971">
    <property type="taxonomic scope" value="Bacteria"/>
</dbReference>
<dbReference type="HOGENOM" id="CLU_096410_3_0_10"/>
<dbReference type="InParanoid" id="Q89Z16"/>
<dbReference type="OrthoDB" id="9811590at2"/>
<dbReference type="Proteomes" id="UP000001414">
    <property type="component" value="Chromosome"/>
</dbReference>
<dbReference type="GO" id="GO:0005886">
    <property type="term" value="C:plasma membrane"/>
    <property type="evidence" value="ECO:0000318"/>
    <property type="project" value="GO_Central"/>
</dbReference>
<dbReference type="GO" id="GO:0005384">
    <property type="term" value="F:manganese ion transmembrane transporter activity"/>
    <property type="evidence" value="ECO:0000318"/>
    <property type="project" value="GO_Central"/>
</dbReference>
<dbReference type="GO" id="GO:0030026">
    <property type="term" value="P:intracellular manganese ion homeostasis"/>
    <property type="evidence" value="ECO:0000318"/>
    <property type="project" value="GO_Central"/>
</dbReference>
<dbReference type="GO" id="GO:0140048">
    <property type="term" value="P:manganese ion export across plasma membrane"/>
    <property type="evidence" value="ECO:0000318"/>
    <property type="project" value="GO_Central"/>
</dbReference>
<dbReference type="HAMAP" id="MF_01521">
    <property type="entry name" value="MntP_pump"/>
    <property type="match status" value="1"/>
</dbReference>
<dbReference type="InterPro" id="IPR003810">
    <property type="entry name" value="Mntp/YtaF"/>
</dbReference>
<dbReference type="InterPro" id="IPR022929">
    <property type="entry name" value="Put_MntP"/>
</dbReference>
<dbReference type="PANTHER" id="PTHR35529">
    <property type="entry name" value="MANGANESE EFFLUX PUMP MNTP-RELATED"/>
    <property type="match status" value="1"/>
</dbReference>
<dbReference type="PANTHER" id="PTHR35529:SF1">
    <property type="entry name" value="MANGANESE EFFLUX PUMP MNTP-RELATED"/>
    <property type="match status" value="1"/>
</dbReference>
<dbReference type="Pfam" id="PF02659">
    <property type="entry name" value="Mntp"/>
    <property type="match status" value="1"/>
</dbReference>
<keyword id="KW-0997">Cell inner membrane</keyword>
<keyword id="KW-1003">Cell membrane</keyword>
<keyword id="KW-0406">Ion transport</keyword>
<keyword id="KW-0464">Manganese</keyword>
<keyword id="KW-0472">Membrane</keyword>
<keyword id="KW-1185">Reference proteome</keyword>
<keyword id="KW-0812">Transmembrane</keyword>
<keyword id="KW-1133">Transmembrane helix</keyword>
<keyword id="KW-0813">Transport</keyword>
<gene>
    <name evidence="1" type="primary">mntP</name>
    <name type="ordered locus">BT_4561</name>
</gene>
<sequence length="193" mass="21212">MTGLEIWLLAIGLAMDCFAVSIASGIILKRTQWRPMLVMALAFGLFQALMPFIGWMFAKTFSHLIESVDHWIAFAILAFLGGRMILESFKDEDCRQTFNPASPKVVFTMAIATSIDALAIGISFALLGINNYTEILSPILIIGFVSFVMSLIGLYFGIKCGCGCARKLKAELWGGIILVAIGLKILIEHLFLQ</sequence>
<evidence type="ECO:0000255" key="1">
    <source>
        <dbReference type="HAMAP-Rule" id="MF_01521"/>
    </source>
</evidence>
<protein>
    <recommendedName>
        <fullName evidence="1">Putative manganese efflux pump MntP</fullName>
    </recommendedName>
</protein>